<name>YXZE_BACSU</name>
<proteinExistence type="inferred from homology"/>
<gene>
    <name type="primary">yxzE</name>
    <name type="ordered locus">BSU38790</name>
</gene>
<sequence length="66" mass="6836">MIVIILLFISIIVFLSVIQPQPSKNKSRQQADSGYFGYSDHSSHHDGCSSDGGFSDSGCGGGGGGD</sequence>
<protein>
    <recommendedName>
        <fullName>Uncharacterized protein YxzE</fullName>
    </recommendedName>
</protein>
<feature type="signal peptide" evidence="1">
    <location>
        <begin position="1"/>
        <end position="25"/>
    </location>
</feature>
<feature type="chain" id="PRO_0000372603" description="Uncharacterized protein YxzE">
    <location>
        <begin position="26"/>
        <end position="66"/>
    </location>
</feature>
<feature type="region of interest" description="Disordered" evidence="2">
    <location>
        <begin position="21"/>
        <end position="66"/>
    </location>
</feature>
<feature type="compositionally biased region" description="Polar residues" evidence="2">
    <location>
        <begin position="21"/>
        <end position="31"/>
    </location>
</feature>
<keyword id="KW-1185">Reference proteome</keyword>
<keyword id="KW-0732">Signal</keyword>
<accession>O32284</accession>
<dbReference type="EMBL" id="AL009126">
    <property type="protein sequence ID" value="CAB15905.1"/>
    <property type="molecule type" value="Genomic_DNA"/>
</dbReference>
<dbReference type="PIR" id="E70083">
    <property type="entry name" value="E70083"/>
</dbReference>
<dbReference type="RefSeq" id="NP_391758.1">
    <property type="nucleotide sequence ID" value="NC_000964.3"/>
</dbReference>
<dbReference type="RefSeq" id="WP_003243758.1">
    <property type="nucleotide sequence ID" value="NZ_OZ025638.1"/>
</dbReference>
<dbReference type="SMR" id="O32284"/>
<dbReference type="FunCoup" id="O32284">
    <property type="interactions" value="82"/>
</dbReference>
<dbReference type="PaxDb" id="224308-BSU38790"/>
<dbReference type="EnsemblBacteria" id="CAB15905">
    <property type="protein sequence ID" value="CAB15905"/>
    <property type="gene ID" value="BSU_38790"/>
</dbReference>
<dbReference type="GeneID" id="937409"/>
<dbReference type="KEGG" id="bsu:BSU38790"/>
<dbReference type="PATRIC" id="fig|224308.179.peg.4198"/>
<dbReference type="InParanoid" id="O32284"/>
<dbReference type="BioCyc" id="BSUB:BSU38790-MONOMER"/>
<dbReference type="Proteomes" id="UP000001570">
    <property type="component" value="Chromosome"/>
</dbReference>
<dbReference type="Pfam" id="PF25184">
    <property type="entry name" value="YxzE"/>
    <property type="match status" value="1"/>
</dbReference>
<reference key="1">
    <citation type="journal article" date="1997" name="Nature">
        <title>The complete genome sequence of the Gram-positive bacterium Bacillus subtilis.</title>
        <authorList>
            <person name="Kunst F."/>
            <person name="Ogasawara N."/>
            <person name="Moszer I."/>
            <person name="Albertini A.M."/>
            <person name="Alloni G."/>
            <person name="Azevedo V."/>
            <person name="Bertero M.G."/>
            <person name="Bessieres P."/>
            <person name="Bolotin A."/>
            <person name="Borchert S."/>
            <person name="Borriss R."/>
            <person name="Boursier L."/>
            <person name="Brans A."/>
            <person name="Braun M."/>
            <person name="Brignell S.C."/>
            <person name="Bron S."/>
            <person name="Brouillet S."/>
            <person name="Bruschi C.V."/>
            <person name="Caldwell B."/>
            <person name="Capuano V."/>
            <person name="Carter N.M."/>
            <person name="Choi S.-K."/>
            <person name="Codani J.-J."/>
            <person name="Connerton I.F."/>
            <person name="Cummings N.J."/>
            <person name="Daniel R.A."/>
            <person name="Denizot F."/>
            <person name="Devine K.M."/>
            <person name="Duesterhoeft A."/>
            <person name="Ehrlich S.D."/>
            <person name="Emmerson P.T."/>
            <person name="Entian K.-D."/>
            <person name="Errington J."/>
            <person name="Fabret C."/>
            <person name="Ferrari E."/>
            <person name="Foulger D."/>
            <person name="Fritz C."/>
            <person name="Fujita M."/>
            <person name="Fujita Y."/>
            <person name="Fuma S."/>
            <person name="Galizzi A."/>
            <person name="Galleron N."/>
            <person name="Ghim S.-Y."/>
            <person name="Glaser P."/>
            <person name="Goffeau A."/>
            <person name="Golightly E.J."/>
            <person name="Grandi G."/>
            <person name="Guiseppi G."/>
            <person name="Guy B.J."/>
            <person name="Haga K."/>
            <person name="Haiech J."/>
            <person name="Harwood C.R."/>
            <person name="Henaut A."/>
            <person name="Hilbert H."/>
            <person name="Holsappel S."/>
            <person name="Hosono S."/>
            <person name="Hullo M.-F."/>
            <person name="Itaya M."/>
            <person name="Jones L.-M."/>
            <person name="Joris B."/>
            <person name="Karamata D."/>
            <person name="Kasahara Y."/>
            <person name="Klaerr-Blanchard M."/>
            <person name="Klein C."/>
            <person name="Kobayashi Y."/>
            <person name="Koetter P."/>
            <person name="Koningstein G."/>
            <person name="Krogh S."/>
            <person name="Kumano M."/>
            <person name="Kurita K."/>
            <person name="Lapidus A."/>
            <person name="Lardinois S."/>
            <person name="Lauber J."/>
            <person name="Lazarevic V."/>
            <person name="Lee S.-M."/>
            <person name="Levine A."/>
            <person name="Liu H."/>
            <person name="Masuda S."/>
            <person name="Mauel C."/>
            <person name="Medigue C."/>
            <person name="Medina N."/>
            <person name="Mellado R.P."/>
            <person name="Mizuno M."/>
            <person name="Moestl D."/>
            <person name="Nakai S."/>
            <person name="Noback M."/>
            <person name="Noone D."/>
            <person name="O'Reilly M."/>
            <person name="Ogawa K."/>
            <person name="Ogiwara A."/>
            <person name="Oudega B."/>
            <person name="Park S.-H."/>
            <person name="Parro V."/>
            <person name="Pohl T.M."/>
            <person name="Portetelle D."/>
            <person name="Porwollik S."/>
            <person name="Prescott A.M."/>
            <person name="Presecan E."/>
            <person name="Pujic P."/>
            <person name="Purnelle B."/>
            <person name="Rapoport G."/>
            <person name="Rey M."/>
            <person name="Reynolds S."/>
            <person name="Rieger M."/>
            <person name="Rivolta C."/>
            <person name="Rocha E."/>
            <person name="Roche B."/>
            <person name="Rose M."/>
            <person name="Sadaie Y."/>
            <person name="Sato T."/>
            <person name="Scanlan E."/>
            <person name="Schleich S."/>
            <person name="Schroeter R."/>
            <person name="Scoffone F."/>
            <person name="Sekiguchi J."/>
            <person name="Sekowska A."/>
            <person name="Seror S.J."/>
            <person name="Serror P."/>
            <person name="Shin B.-S."/>
            <person name="Soldo B."/>
            <person name="Sorokin A."/>
            <person name="Tacconi E."/>
            <person name="Takagi T."/>
            <person name="Takahashi H."/>
            <person name="Takemaru K."/>
            <person name="Takeuchi M."/>
            <person name="Tamakoshi A."/>
            <person name="Tanaka T."/>
            <person name="Terpstra P."/>
            <person name="Tognoni A."/>
            <person name="Tosato V."/>
            <person name="Uchiyama S."/>
            <person name="Vandenbol M."/>
            <person name="Vannier F."/>
            <person name="Vassarotti A."/>
            <person name="Viari A."/>
            <person name="Wambutt R."/>
            <person name="Wedler E."/>
            <person name="Wedler H."/>
            <person name="Weitzenegger T."/>
            <person name="Winters P."/>
            <person name="Wipat A."/>
            <person name="Yamamoto H."/>
            <person name="Yamane K."/>
            <person name="Yasumoto K."/>
            <person name="Yata K."/>
            <person name="Yoshida K."/>
            <person name="Yoshikawa H.-F."/>
            <person name="Zumstein E."/>
            <person name="Yoshikawa H."/>
            <person name="Danchin A."/>
        </authorList>
    </citation>
    <scope>NUCLEOTIDE SEQUENCE [LARGE SCALE GENOMIC DNA]</scope>
    <source>
        <strain>168</strain>
    </source>
</reference>
<organism>
    <name type="scientific">Bacillus subtilis (strain 168)</name>
    <dbReference type="NCBI Taxonomy" id="224308"/>
    <lineage>
        <taxon>Bacteria</taxon>
        <taxon>Bacillati</taxon>
        <taxon>Bacillota</taxon>
        <taxon>Bacilli</taxon>
        <taxon>Bacillales</taxon>
        <taxon>Bacillaceae</taxon>
        <taxon>Bacillus</taxon>
    </lineage>
</organism>
<evidence type="ECO:0000255" key="1"/>
<evidence type="ECO:0000256" key="2">
    <source>
        <dbReference type="SAM" id="MobiDB-lite"/>
    </source>
</evidence>